<evidence type="ECO:0000255" key="1">
    <source>
        <dbReference type="HAMAP-Rule" id="MF_01416"/>
    </source>
</evidence>
<proteinExistence type="inferred from homology"/>
<comment type="function">
    <text evidence="1">F(1)F(0) ATP synthase produces ATP from ADP in the presence of a proton or sodium gradient. F-type ATPases consist of two structural domains, F(1) containing the extramembraneous catalytic core and F(0) containing the membrane proton channel, linked together by a central stalk and a peripheral stalk. During catalysis, ATP synthesis in the catalytic domain of F(1) is coupled via a rotary mechanism of the central stalk subunits to proton translocation.</text>
</comment>
<comment type="function">
    <text evidence="1">This protein is part of the stalk that links CF(0) to CF(1). It either transmits conformational changes from CF(0) to CF(1) or is implicated in proton conduction.</text>
</comment>
<comment type="subunit">
    <text evidence="1">F-type ATPases have 2 components, F(1) - the catalytic core - and F(0) - the membrane proton channel. F(1) has five subunits: alpha(3), beta(3), gamma(1), delta(1), epsilon(1). F(0) has three main subunits: a(1), b(2) and c(10-14). The alpha and beta chains form an alternating ring which encloses part of the gamma chain. F(1) is attached to F(0) by a central stalk formed by the gamma and epsilon chains, while a peripheral stalk is formed by the delta and b chains.</text>
</comment>
<comment type="subcellular location">
    <subcellularLocation>
        <location evidence="1">Cell inner membrane</location>
        <topology evidence="1">Peripheral membrane protein</topology>
    </subcellularLocation>
</comment>
<comment type="similarity">
    <text evidence="1">Belongs to the ATPase delta chain family.</text>
</comment>
<dbReference type="EMBL" id="CP000243">
    <property type="protein sequence ID" value="ABE09716.1"/>
    <property type="molecule type" value="Genomic_DNA"/>
</dbReference>
<dbReference type="RefSeq" id="WP_001288587.1">
    <property type="nucleotide sequence ID" value="NZ_CP064825.1"/>
</dbReference>
<dbReference type="SMR" id="Q1R4J8"/>
<dbReference type="GeneID" id="93778232"/>
<dbReference type="KEGG" id="eci:UTI89_C4289"/>
<dbReference type="HOGENOM" id="CLU_085114_3_0_6"/>
<dbReference type="Proteomes" id="UP000001952">
    <property type="component" value="Chromosome"/>
</dbReference>
<dbReference type="GO" id="GO:0005886">
    <property type="term" value="C:plasma membrane"/>
    <property type="evidence" value="ECO:0007669"/>
    <property type="project" value="UniProtKB-SubCell"/>
</dbReference>
<dbReference type="GO" id="GO:0045259">
    <property type="term" value="C:proton-transporting ATP synthase complex"/>
    <property type="evidence" value="ECO:0007669"/>
    <property type="project" value="UniProtKB-KW"/>
</dbReference>
<dbReference type="GO" id="GO:0046933">
    <property type="term" value="F:proton-transporting ATP synthase activity, rotational mechanism"/>
    <property type="evidence" value="ECO:0007669"/>
    <property type="project" value="UniProtKB-UniRule"/>
</dbReference>
<dbReference type="FunFam" id="1.10.520.20:FF:000001">
    <property type="entry name" value="ATP synthase subunit delta"/>
    <property type="match status" value="1"/>
</dbReference>
<dbReference type="Gene3D" id="1.10.520.20">
    <property type="entry name" value="N-terminal domain of the delta subunit of the F1F0-ATP synthase"/>
    <property type="match status" value="1"/>
</dbReference>
<dbReference type="HAMAP" id="MF_01416">
    <property type="entry name" value="ATP_synth_delta_bact"/>
    <property type="match status" value="1"/>
</dbReference>
<dbReference type="InterPro" id="IPR026015">
    <property type="entry name" value="ATP_synth_OSCP/delta_N_sf"/>
</dbReference>
<dbReference type="InterPro" id="IPR020781">
    <property type="entry name" value="ATPase_OSCP/d_CS"/>
</dbReference>
<dbReference type="InterPro" id="IPR000711">
    <property type="entry name" value="ATPase_OSCP/dsu"/>
</dbReference>
<dbReference type="NCBIfam" id="TIGR01145">
    <property type="entry name" value="ATP_synt_delta"/>
    <property type="match status" value="1"/>
</dbReference>
<dbReference type="NCBIfam" id="NF004402">
    <property type="entry name" value="PRK05758.2-2"/>
    <property type="match status" value="1"/>
</dbReference>
<dbReference type="NCBIfam" id="NF004404">
    <property type="entry name" value="PRK05758.2-5"/>
    <property type="match status" value="1"/>
</dbReference>
<dbReference type="PANTHER" id="PTHR11910">
    <property type="entry name" value="ATP SYNTHASE DELTA CHAIN"/>
    <property type="match status" value="1"/>
</dbReference>
<dbReference type="Pfam" id="PF00213">
    <property type="entry name" value="OSCP"/>
    <property type="match status" value="1"/>
</dbReference>
<dbReference type="PRINTS" id="PR00125">
    <property type="entry name" value="ATPASEDELTA"/>
</dbReference>
<dbReference type="SUPFAM" id="SSF47928">
    <property type="entry name" value="N-terminal domain of the delta subunit of the F1F0-ATP synthase"/>
    <property type="match status" value="1"/>
</dbReference>
<dbReference type="PROSITE" id="PS00389">
    <property type="entry name" value="ATPASE_DELTA"/>
    <property type="match status" value="1"/>
</dbReference>
<reference key="1">
    <citation type="journal article" date="2006" name="Proc. Natl. Acad. Sci. U.S.A.">
        <title>Identification of genes subject to positive selection in uropathogenic strains of Escherichia coli: a comparative genomics approach.</title>
        <authorList>
            <person name="Chen S.L."/>
            <person name="Hung C.-S."/>
            <person name="Xu J."/>
            <person name="Reigstad C.S."/>
            <person name="Magrini V."/>
            <person name="Sabo A."/>
            <person name="Blasiar D."/>
            <person name="Bieri T."/>
            <person name="Meyer R.R."/>
            <person name="Ozersky P."/>
            <person name="Armstrong J.R."/>
            <person name="Fulton R.S."/>
            <person name="Latreille J.P."/>
            <person name="Spieth J."/>
            <person name="Hooton T.M."/>
            <person name="Mardis E.R."/>
            <person name="Hultgren S.J."/>
            <person name="Gordon J.I."/>
        </authorList>
    </citation>
    <scope>NUCLEOTIDE SEQUENCE [LARGE SCALE GENOMIC DNA]</scope>
    <source>
        <strain>UTI89 / UPEC</strain>
    </source>
</reference>
<keyword id="KW-0066">ATP synthesis</keyword>
<keyword id="KW-0997">Cell inner membrane</keyword>
<keyword id="KW-1003">Cell membrane</keyword>
<keyword id="KW-0139">CF(1)</keyword>
<keyword id="KW-0375">Hydrogen ion transport</keyword>
<keyword id="KW-0406">Ion transport</keyword>
<keyword id="KW-0472">Membrane</keyword>
<keyword id="KW-0813">Transport</keyword>
<accession>Q1R4J8</accession>
<organism>
    <name type="scientific">Escherichia coli (strain UTI89 / UPEC)</name>
    <dbReference type="NCBI Taxonomy" id="364106"/>
    <lineage>
        <taxon>Bacteria</taxon>
        <taxon>Pseudomonadati</taxon>
        <taxon>Pseudomonadota</taxon>
        <taxon>Gammaproteobacteria</taxon>
        <taxon>Enterobacterales</taxon>
        <taxon>Enterobacteriaceae</taxon>
        <taxon>Escherichia</taxon>
    </lineage>
</organism>
<sequence>MSEFITVARPYAKAAFDFAVEHQSVERWQDMLAFAAEVTKNEQMAELLSGALAPETLAESFIAVCGEQLDENGQNLIRVMAENGRLNALPDVLEQFIHLRAVSEATAEVDVISAAALSEQQLAKISAAMEKRLSRKVKLNCKIDKSVMAGVIIRAGDMVIDGSVRGRLERLADVLQS</sequence>
<feature type="chain" id="PRO_0000370975" description="ATP synthase subunit delta">
    <location>
        <begin position="1"/>
        <end position="177"/>
    </location>
</feature>
<protein>
    <recommendedName>
        <fullName evidence="1">ATP synthase subunit delta</fullName>
    </recommendedName>
    <alternativeName>
        <fullName evidence="1">ATP synthase F(1) sector subunit delta</fullName>
    </alternativeName>
    <alternativeName>
        <fullName evidence="1">F-type ATPase subunit delta</fullName>
        <shortName evidence="1">F-ATPase subunit delta</shortName>
    </alternativeName>
</protein>
<name>ATPD_ECOUT</name>
<gene>
    <name evidence="1" type="primary">atpH</name>
    <name type="ordered locus">UTI89_C4289</name>
</gene>